<comment type="function">
    <text evidence="1">GTPase activator for the Rho-type GTPases by converting them to an inactive GDP-bound state. Has strong activity toward RHOA, and weaker activity toward RAC1 and CDC42. May act as a specific effector of RAP2A to regulate Rho (By similarity). In concert with RASIP1, suppresses RhoA signaling and dampens ROCK and MYH9 activities in endothelial cells and plays an essential role in blood vessel tubulogenesis (By similarity).</text>
</comment>
<comment type="subunit">
    <text evidence="1">Interacts with PTPN13/PTPL1. Interacts with RAP2A via its coiled coil domain (By similarity). Interacts with RASIP1 (By similarity).</text>
</comment>
<organism>
    <name type="scientific">Bos taurus</name>
    <name type="common">Bovine</name>
    <dbReference type="NCBI Taxonomy" id="9913"/>
    <lineage>
        <taxon>Eukaryota</taxon>
        <taxon>Metazoa</taxon>
        <taxon>Chordata</taxon>
        <taxon>Craniata</taxon>
        <taxon>Vertebrata</taxon>
        <taxon>Euteleostomi</taxon>
        <taxon>Mammalia</taxon>
        <taxon>Eutheria</taxon>
        <taxon>Laurasiatheria</taxon>
        <taxon>Artiodactyla</taxon>
        <taxon>Ruminantia</taxon>
        <taxon>Pecora</taxon>
        <taxon>Bovidae</taxon>
        <taxon>Bovinae</taxon>
        <taxon>Bos</taxon>
    </lineage>
</organism>
<reference key="1">
    <citation type="submission" date="2007-07" db="EMBL/GenBank/DDBJ databases">
        <authorList>
            <consortium name="NIH - Mammalian Gene Collection (MGC) project"/>
        </authorList>
    </citation>
    <scope>NUCLEOTIDE SEQUENCE [LARGE SCALE MRNA]</scope>
    <source>
        <strain>Hereford</strain>
        <tissue>Uterus</tissue>
    </source>
</reference>
<keyword id="KW-0175">Coiled coil</keyword>
<keyword id="KW-0343">GTPase activation</keyword>
<keyword id="KW-0479">Metal-binding</keyword>
<keyword id="KW-0597">Phosphoprotein</keyword>
<keyword id="KW-1185">Reference proteome</keyword>
<keyword id="KW-0862">Zinc</keyword>
<keyword id="KW-0863">Zinc-finger</keyword>
<name>RHG29_BOVIN</name>
<gene>
    <name type="primary">ARHGAP29</name>
</gene>
<evidence type="ECO:0000250" key="1"/>
<evidence type="ECO:0000250" key="2">
    <source>
        <dbReference type="UniProtKB" id="Q52LW3"/>
    </source>
</evidence>
<evidence type="ECO:0000250" key="3">
    <source>
        <dbReference type="UniProtKB" id="Q5PQJ5"/>
    </source>
</evidence>
<evidence type="ECO:0000250" key="4">
    <source>
        <dbReference type="UniProtKB" id="Q8CGF1"/>
    </source>
</evidence>
<evidence type="ECO:0000255" key="5"/>
<evidence type="ECO:0000255" key="6">
    <source>
        <dbReference type="PROSITE-ProRule" id="PRU00172"/>
    </source>
</evidence>
<evidence type="ECO:0000255" key="7">
    <source>
        <dbReference type="PROSITE-ProRule" id="PRU00226"/>
    </source>
</evidence>
<evidence type="ECO:0000255" key="8">
    <source>
        <dbReference type="PROSITE-ProRule" id="PRU01077"/>
    </source>
</evidence>
<evidence type="ECO:0000256" key="9">
    <source>
        <dbReference type="SAM" id="MobiDB-lite"/>
    </source>
</evidence>
<protein>
    <recommendedName>
        <fullName>Rho GTPase-activating protein 29</fullName>
    </recommendedName>
    <alternativeName>
        <fullName>Rho-type GTPase-activating protein 29</fullName>
    </alternativeName>
</protein>
<accession>A7YY57</accession>
<proteinExistence type="evidence at transcript level"/>
<dbReference type="EMBL" id="BC151351">
    <property type="protein sequence ID" value="AAI51352.1"/>
    <property type="molecule type" value="mRNA"/>
</dbReference>
<dbReference type="RefSeq" id="NP_001095955.1">
    <property type="nucleotide sequence ID" value="NM_001102485.1"/>
</dbReference>
<dbReference type="RefSeq" id="XP_005204323.1">
    <property type="nucleotide sequence ID" value="XM_005204266.4"/>
</dbReference>
<dbReference type="RefSeq" id="XP_010801599.1">
    <property type="nucleotide sequence ID" value="XM_010803297.4"/>
</dbReference>
<dbReference type="SMR" id="A7YY57"/>
<dbReference type="FunCoup" id="A7YY57">
    <property type="interactions" value="368"/>
</dbReference>
<dbReference type="STRING" id="9913.ENSBTAP00000069642"/>
<dbReference type="iPTMnet" id="A7YY57"/>
<dbReference type="PaxDb" id="9913-ENSBTAP00000005488"/>
<dbReference type="Ensembl" id="ENSBTAT00000071906.2">
    <property type="protein sequence ID" value="ENSBTAP00000072902.1"/>
    <property type="gene ID" value="ENSBTAG00000004190.7"/>
</dbReference>
<dbReference type="GeneID" id="504657"/>
<dbReference type="KEGG" id="bta:504657"/>
<dbReference type="CTD" id="9411"/>
<dbReference type="VEuPathDB" id="HostDB:ENSBTAG00000004190"/>
<dbReference type="VGNC" id="VGNC:26087">
    <property type="gene designation" value="ARHGAP29"/>
</dbReference>
<dbReference type="eggNOG" id="KOG1453">
    <property type="taxonomic scope" value="Eukaryota"/>
</dbReference>
<dbReference type="GeneTree" id="ENSGT00950000183110"/>
<dbReference type="HOGENOM" id="CLU_006236_2_0_1"/>
<dbReference type="InParanoid" id="A7YY57"/>
<dbReference type="OMA" id="DQYQSCM"/>
<dbReference type="OrthoDB" id="79452at2759"/>
<dbReference type="TreeFam" id="TF351450"/>
<dbReference type="Reactome" id="R-BTA-8980692">
    <property type="pathway name" value="RHOA GTPase cycle"/>
</dbReference>
<dbReference type="Reactome" id="R-BTA-9013148">
    <property type="pathway name" value="CDC42 GTPase cycle"/>
</dbReference>
<dbReference type="Reactome" id="R-BTA-9013149">
    <property type="pathway name" value="RAC1 GTPase cycle"/>
</dbReference>
<dbReference type="Proteomes" id="UP000009136">
    <property type="component" value="Chromosome 3"/>
</dbReference>
<dbReference type="Bgee" id="ENSBTAG00000004190">
    <property type="expression patterns" value="Expressed in spermatid and 108 other cell types or tissues"/>
</dbReference>
<dbReference type="GO" id="GO:0005737">
    <property type="term" value="C:cytoplasm"/>
    <property type="evidence" value="ECO:0000318"/>
    <property type="project" value="GO_Central"/>
</dbReference>
<dbReference type="GO" id="GO:0005096">
    <property type="term" value="F:GTPase activator activity"/>
    <property type="evidence" value="ECO:0000318"/>
    <property type="project" value="GO_Central"/>
</dbReference>
<dbReference type="GO" id="GO:0008270">
    <property type="term" value="F:zinc ion binding"/>
    <property type="evidence" value="ECO:0007669"/>
    <property type="project" value="UniProtKB-KW"/>
</dbReference>
<dbReference type="GO" id="GO:0051058">
    <property type="term" value="P:negative regulation of small GTPase mediated signal transduction"/>
    <property type="evidence" value="ECO:0000318"/>
    <property type="project" value="GO_Central"/>
</dbReference>
<dbReference type="GO" id="GO:0007165">
    <property type="term" value="P:signal transduction"/>
    <property type="evidence" value="ECO:0007669"/>
    <property type="project" value="InterPro"/>
</dbReference>
<dbReference type="CDD" id="cd20816">
    <property type="entry name" value="C1_GMIP-like"/>
    <property type="match status" value="1"/>
</dbReference>
<dbReference type="FunFam" id="1.10.555.10:FF:000016">
    <property type="entry name" value="Rho GTPase activating protein 29"/>
    <property type="match status" value="1"/>
</dbReference>
<dbReference type="FunFam" id="1.20.1270.60:FF:000038">
    <property type="entry name" value="Rho GTPase activating protein 29"/>
    <property type="match status" value="1"/>
</dbReference>
<dbReference type="Gene3D" id="3.30.60.20">
    <property type="match status" value="1"/>
</dbReference>
<dbReference type="Gene3D" id="1.20.1270.60">
    <property type="entry name" value="Arfaptin homology (AH) domain/BAR domain"/>
    <property type="match status" value="1"/>
</dbReference>
<dbReference type="Gene3D" id="1.10.555.10">
    <property type="entry name" value="Rho GTPase activation protein"/>
    <property type="match status" value="1"/>
</dbReference>
<dbReference type="InterPro" id="IPR027267">
    <property type="entry name" value="AH/BAR_dom_sf"/>
</dbReference>
<dbReference type="InterPro" id="IPR046349">
    <property type="entry name" value="C1-like_sf"/>
</dbReference>
<dbReference type="InterPro" id="IPR031160">
    <property type="entry name" value="F_BAR"/>
</dbReference>
<dbReference type="InterPro" id="IPR054713">
    <property type="entry name" value="GMIP/FCHO2-like_FCH"/>
</dbReference>
<dbReference type="InterPro" id="IPR002219">
    <property type="entry name" value="PE/DAG-bd"/>
</dbReference>
<dbReference type="InterPro" id="IPR057028">
    <property type="entry name" value="RHG29_45_N"/>
</dbReference>
<dbReference type="InterPro" id="IPR008936">
    <property type="entry name" value="Rho_GTPase_activation_prot"/>
</dbReference>
<dbReference type="InterPro" id="IPR051025">
    <property type="entry name" value="RhoGAP"/>
</dbReference>
<dbReference type="InterPro" id="IPR000198">
    <property type="entry name" value="RhoGAP_dom"/>
</dbReference>
<dbReference type="PANTHER" id="PTHR15228:SF7">
    <property type="entry name" value="RHO GTPASE-ACTIVATING PROTEIN 29"/>
    <property type="match status" value="1"/>
</dbReference>
<dbReference type="PANTHER" id="PTHR15228">
    <property type="entry name" value="SPERMATHECAL PHYSIOLOGY VARIANT"/>
    <property type="match status" value="1"/>
</dbReference>
<dbReference type="Pfam" id="PF00130">
    <property type="entry name" value="C1_1"/>
    <property type="match status" value="1"/>
</dbReference>
<dbReference type="Pfam" id="PF22699">
    <property type="entry name" value="GMIP-like_FCH"/>
    <property type="match status" value="1"/>
</dbReference>
<dbReference type="Pfam" id="PF24235">
    <property type="entry name" value="RHG29_45_N"/>
    <property type="match status" value="1"/>
</dbReference>
<dbReference type="Pfam" id="PF00620">
    <property type="entry name" value="RhoGAP"/>
    <property type="match status" value="1"/>
</dbReference>
<dbReference type="SMART" id="SM00109">
    <property type="entry name" value="C1"/>
    <property type="match status" value="1"/>
</dbReference>
<dbReference type="SMART" id="SM00324">
    <property type="entry name" value="RhoGAP"/>
    <property type="match status" value="1"/>
</dbReference>
<dbReference type="SUPFAM" id="SSF103657">
    <property type="entry name" value="BAR/IMD domain-like"/>
    <property type="match status" value="1"/>
</dbReference>
<dbReference type="SUPFAM" id="SSF57889">
    <property type="entry name" value="Cysteine-rich domain"/>
    <property type="match status" value="1"/>
</dbReference>
<dbReference type="SUPFAM" id="SSF48350">
    <property type="entry name" value="GTPase activation domain, GAP"/>
    <property type="match status" value="1"/>
</dbReference>
<dbReference type="PROSITE" id="PS51741">
    <property type="entry name" value="F_BAR"/>
    <property type="match status" value="1"/>
</dbReference>
<dbReference type="PROSITE" id="PS50238">
    <property type="entry name" value="RHOGAP"/>
    <property type="match status" value="1"/>
</dbReference>
<dbReference type="PROSITE" id="PS00479">
    <property type="entry name" value="ZF_DAG_PE_1"/>
    <property type="match status" value="1"/>
</dbReference>
<dbReference type="PROSITE" id="PS50081">
    <property type="entry name" value="ZF_DAG_PE_2"/>
    <property type="match status" value="1"/>
</dbReference>
<sequence>MIAYKQKKTKKKRVLSTGQLSTDVTTSEMGLKSINSNAILDPDYIKELVNDIRKFSHMLLYLKEAILSECFKEVIHIRLDELLRVLKSVMNKHQNLNSVDLQNAAEMLIAKVKAVNFTEVNEENKNDLFREVFSSIETLAFTFGNILTNFLMGDVGNDSLLRLPVSQESKSFESVSVESVDSSNEKGSFSPIELDSMLLKNTNSVELALSYAKTWSKYTKNIVSWVEKKLNLELESTRNIVKLAEATRTNIGLQEFMPLQSLFTNALLNDIESSHLLQQTIAALQANKFVQPLLGRKNEMEKQRKEIKELWKQEQNKMLETETALKKAKLLCMQRQDEYEKAKSSMFRAEEEHLSSSSGLVKNLNRQLEKKRRLEEEALQKVEEANELYKVCVTNVEERRNDLENTKREILTQLRKLVFQCDLTLKAVTVNLFQMQQLQAASLSSNLQSLCDSAKLYDPGQEYSEFVRATNSAEEEKVDGNVNKQLSSPPISGYGPSDSLEDVVRLPDSSNKMEEDRCSNSADITGPSFLRSWTFGMFSDSESTGGSSESRSLDSESISPGDFHRKLPRTPSSGTMSSADDLDEREPPSPSEAGPNSLGTFKKTLMSKAALTHKFRKLRSPTKCRDCEGIVVFHGVECEECLLVCHRKCLENLVIICGHQKLMGKIHLFGAEFTQVAKKEPDGIPFVLKMCASEIENRALSLQGIYRVCGNKIKTEKLCQALENGMHLVDISEFSSHDICDVLKLYLRQLPEPFILFRLYKEFIDLAVEIQHVNEEQEMKKDNPEDKKWPSSSIEISRILLKSKDLLRQLPASNFNSLHYLIVHLKRVVDHSEENKMNSRNLGVIFGPSLLRPRPTTAPITISSLADYSNQARLVEFLITYSQKIFDGSLQPQDSAVGSAGGIAPQVDPGYLPKSLLSPEERDPERSMKSLFFSSKEDIQTTDSECKSFESTPSFEESERKQNALEKCDAYLIDNKGRLLVDQELESASRKTEDACKTSKLPTLKSDREINGVERHLPRTRIRPVSLPIDRLLLLASSPTERNGRNMGNVNSDKLCKNPVFEGVNRKDSPTVVCSKFDGFDQQTLQKTREKQYEQNDHTAKTGMIVPSAFQERGVALNIRSSGDHPVSITQPSKPYTEPVRSTRQVSERRSSDSCPPASVRTPRTLQPQHWTTFYKPPAPAASGRGDEEKPVTPSVAVPPGTTHAPQEHVLKSVPGSENASAGPVHPVSRPEEKAEERDQPDVPTACQRPRLKRMQQFEDLEDEIPQFV</sequence>
<feature type="chain" id="PRO_0000317581" description="Rho GTPase-activating protein 29">
    <location>
        <begin position="1"/>
        <end position="1269"/>
    </location>
</feature>
<feature type="domain" description="F-BAR" evidence="8">
    <location>
        <begin position="192"/>
        <end position="462"/>
    </location>
</feature>
<feature type="domain" description="Rho-GAP" evidence="6">
    <location>
        <begin position="671"/>
        <end position="886"/>
    </location>
</feature>
<feature type="zinc finger region" description="Phorbol-ester/DAG-type" evidence="7">
    <location>
        <begin position="612"/>
        <end position="657"/>
    </location>
</feature>
<feature type="region of interest" description="Disordered" evidence="9">
    <location>
        <begin position="472"/>
        <end position="523"/>
    </location>
</feature>
<feature type="region of interest" description="Disordered" evidence="9">
    <location>
        <begin position="540"/>
        <end position="599"/>
    </location>
</feature>
<feature type="region of interest" description="Disordered" evidence="9">
    <location>
        <begin position="909"/>
        <end position="936"/>
    </location>
</feature>
<feature type="region of interest" description="Disordered" evidence="9">
    <location>
        <begin position="1120"/>
        <end position="1269"/>
    </location>
</feature>
<feature type="region of interest" description="Interaction with PTPN13/PTPL1" evidence="1">
    <location>
        <begin position="1266"/>
        <end position="1269"/>
    </location>
</feature>
<feature type="coiled-coil region" evidence="5">
    <location>
        <begin position="296"/>
        <end position="418"/>
    </location>
</feature>
<feature type="compositionally biased region" description="Low complexity" evidence="9">
    <location>
        <begin position="540"/>
        <end position="559"/>
    </location>
</feature>
<feature type="compositionally biased region" description="Basic and acidic residues" evidence="9">
    <location>
        <begin position="919"/>
        <end position="928"/>
    </location>
</feature>
<feature type="compositionally biased region" description="Polar residues" evidence="9">
    <location>
        <begin position="1128"/>
        <end position="1145"/>
    </location>
</feature>
<feature type="compositionally biased region" description="Polar residues" evidence="9">
    <location>
        <begin position="1162"/>
        <end position="1172"/>
    </location>
</feature>
<feature type="compositionally biased region" description="Basic and acidic residues" evidence="9">
    <location>
        <begin position="1229"/>
        <end position="1241"/>
    </location>
</feature>
<feature type="compositionally biased region" description="Acidic residues" evidence="9">
    <location>
        <begin position="1259"/>
        <end position="1269"/>
    </location>
</feature>
<feature type="site" description="Arginine finger; crucial for GTP hydrolysis by stabilizing the transition state" evidence="6">
    <location>
        <position position="707"/>
    </location>
</feature>
<feature type="modified residue" description="Phosphoserine" evidence="4">
    <location>
        <position position="171"/>
    </location>
</feature>
<feature type="modified residue" description="Phosphoserine" evidence="2">
    <location>
        <position position="176"/>
    </location>
</feature>
<feature type="modified residue" description="Phosphoserine" evidence="2">
    <location>
        <position position="179"/>
    </location>
</feature>
<feature type="modified residue" description="Phosphoserine" evidence="2">
    <location>
        <position position="190"/>
    </location>
</feature>
<feature type="modified residue" description="Phosphoserine" evidence="2">
    <location>
        <position position="499"/>
    </location>
</feature>
<feature type="modified residue" description="Phosphoserine" evidence="4">
    <location>
        <position position="519"/>
    </location>
</feature>
<feature type="modified residue" description="Phosphoserine" evidence="3">
    <location>
        <position position="552"/>
    </location>
</feature>
<feature type="modified residue" description="Phosphoserine" evidence="3">
    <location>
        <position position="918"/>
    </location>
</feature>
<feature type="modified residue" description="Phosphoserine" evidence="2">
    <location>
        <position position="954"/>
    </location>
</feature>
<feature type="modified residue" description="Phosphoserine" evidence="2">
    <location>
        <position position="1026"/>
    </location>
</feature>
<feature type="modified residue" description="Phosphoserine" evidence="4">
    <location>
        <position position="1152"/>
    </location>
</feature>
<feature type="modified residue" description="Phosphoserine" evidence="2">
    <location>
        <position position="1154"/>
    </location>
</feature>